<proteinExistence type="evidence at protein level"/>
<accession>O89050</accession>
<keyword id="KW-0002">3D-structure</keyword>
<keyword id="KW-0007">Acetylation</keyword>
<keyword id="KW-0966">Cell projection</keyword>
<keyword id="KW-0963">Cytoplasm</keyword>
<keyword id="KW-0880">Kelch repeat</keyword>
<keyword id="KW-0539">Nucleus</keyword>
<keyword id="KW-1185">Reference proteome</keyword>
<keyword id="KW-0677">Repeat</keyword>
<keyword id="KW-0770">Synapse</keyword>
<evidence type="ECO:0000250" key="1">
    <source>
        <dbReference type="UniProtKB" id="Q99PV3"/>
    </source>
</evidence>
<evidence type="ECO:0000250" key="2">
    <source>
        <dbReference type="UniProtKB" id="Q9UL63"/>
    </source>
</evidence>
<evidence type="ECO:0000255" key="3">
    <source>
        <dbReference type="PROSITE-ProRule" id="PRU00058"/>
    </source>
</evidence>
<evidence type="ECO:0000255" key="4">
    <source>
        <dbReference type="PROSITE-ProRule" id="PRU00126"/>
    </source>
</evidence>
<evidence type="ECO:0000269" key="5">
    <source>
    </source>
</evidence>
<evidence type="ECO:0000269" key="6">
    <source>
    </source>
</evidence>
<evidence type="ECO:0000269" key="7">
    <source>
    </source>
</evidence>
<evidence type="ECO:0007829" key="8">
    <source>
        <dbReference type="PDB" id="4PQQ"/>
    </source>
</evidence>
<dbReference type="EMBL" id="U72194">
    <property type="protein sequence ID" value="AAC63849.1"/>
    <property type="molecule type" value="mRNA"/>
</dbReference>
<dbReference type="EMBL" id="BC013703">
    <property type="protein sequence ID" value="AAH13703.1"/>
    <property type="molecule type" value="mRNA"/>
</dbReference>
<dbReference type="CCDS" id="CCDS19982.1"/>
<dbReference type="RefSeq" id="NP_038819.1">
    <property type="nucleotide sequence ID" value="NM_013791.3"/>
</dbReference>
<dbReference type="PDB" id="4PQQ">
    <property type="method" value="X-ray"/>
    <property type="resolution" value="1.55 A"/>
    <property type="chains" value="A=12-167"/>
</dbReference>
<dbReference type="PDBsum" id="4PQQ"/>
<dbReference type="SMR" id="O89050"/>
<dbReference type="BioGRID" id="205222">
    <property type="interactions" value="10"/>
</dbReference>
<dbReference type="DIP" id="DIP-61380N"/>
<dbReference type="FunCoup" id="O89050">
    <property type="interactions" value="3618"/>
</dbReference>
<dbReference type="IntAct" id="O89050">
    <property type="interactions" value="7"/>
</dbReference>
<dbReference type="STRING" id="10090.ENSMUSP00000026699"/>
<dbReference type="iPTMnet" id="O89050"/>
<dbReference type="PhosphoSitePlus" id="O89050"/>
<dbReference type="SwissPalm" id="O89050"/>
<dbReference type="PaxDb" id="10090-ENSMUSP00000026699"/>
<dbReference type="PeptideAtlas" id="O89050"/>
<dbReference type="ProteomicsDB" id="290255"/>
<dbReference type="Pumba" id="O89050"/>
<dbReference type="Antibodypedia" id="18008">
    <property type="antibodies" value="144 antibodies from 22 providers"/>
</dbReference>
<dbReference type="DNASU" id="27418"/>
<dbReference type="Ensembl" id="ENSMUST00000026699.15">
    <property type="protein sequence ID" value="ENSMUSP00000026699.9"/>
    <property type="gene ID" value="ENSMUSG00000025609.16"/>
</dbReference>
<dbReference type="GeneID" id="27418"/>
<dbReference type="KEGG" id="mmu:27418"/>
<dbReference type="UCSC" id="uc009bgf.1">
    <property type="organism name" value="mouse"/>
</dbReference>
<dbReference type="AGR" id="MGI:1351638"/>
<dbReference type="CTD" id="4289"/>
<dbReference type="MGI" id="MGI:1351638">
    <property type="gene designation" value="Mkln1"/>
</dbReference>
<dbReference type="VEuPathDB" id="HostDB:ENSMUSG00000025609"/>
<dbReference type="eggNOG" id="KOG2437">
    <property type="taxonomic scope" value="Eukaryota"/>
</dbReference>
<dbReference type="GeneTree" id="ENSGT00390000001702"/>
<dbReference type="HOGENOM" id="CLU_004210_1_0_1"/>
<dbReference type="InParanoid" id="O89050"/>
<dbReference type="OMA" id="NKQDYKH"/>
<dbReference type="OrthoDB" id="10052615at2759"/>
<dbReference type="PhylomeDB" id="O89050"/>
<dbReference type="TreeFam" id="TF323659"/>
<dbReference type="Reactome" id="R-MMU-9861718">
    <property type="pathway name" value="Regulation of pyruvate metabolism"/>
</dbReference>
<dbReference type="BioGRID-ORCS" id="27418">
    <property type="hits" value="3 hits in 76 CRISPR screens"/>
</dbReference>
<dbReference type="ChiTaRS" id="Mkln1">
    <property type="organism name" value="mouse"/>
</dbReference>
<dbReference type="EvolutionaryTrace" id="O89050"/>
<dbReference type="PRO" id="PR:O89050"/>
<dbReference type="Proteomes" id="UP000000589">
    <property type="component" value="Chromosome 6"/>
</dbReference>
<dbReference type="RNAct" id="O89050">
    <property type="molecule type" value="protein"/>
</dbReference>
<dbReference type="Bgee" id="ENSMUSG00000025609">
    <property type="expression patterns" value="Expressed in spermatocyte and 259 other cell types or tissues"/>
</dbReference>
<dbReference type="ExpressionAtlas" id="O89050">
    <property type="expression patterns" value="baseline and differential"/>
</dbReference>
<dbReference type="GO" id="GO:0005938">
    <property type="term" value="C:cell cortex"/>
    <property type="evidence" value="ECO:0000314"/>
    <property type="project" value="UniProtKB"/>
</dbReference>
<dbReference type="GO" id="GO:0005737">
    <property type="term" value="C:cytoplasm"/>
    <property type="evidence" value="ECO:0000314"/>
    <property type="project" value="MGI"/>
</dbReference>
<dbReference type="GO" id="GO:0005829">
    <property type="term" value="C:cytosol"/>
    <property type="evidence" value="ECO:0000314"/>
    <property type="project" value="UniProtKB"/>
</dbReference>
<dbReference type="GO" id="GO:0098982">
    <property type="term" value="C:GABA-ergic synapse"/>
    <property type="evidence" value="ECO:0000314"/>
    <property type="project" value="SynGO"/>
</dbReference>
<dbReference type="GO" id="GO:0005654">
    <property type="term" value="C:nucleoplasm"/>
    <property type="evidence" value="ECO:0000314"/>
    <property type="project" value="UniProtKB"/>
</dbReference>
<dbReference type="GO" id="GO:0098895">
    <property type="term" value="C:postsynaptic endosome membrane"/>
    <property type="evidence" value="ECO:0000314"/>
    <property type="project" value="SynGO"/>
</dbReference>
<dbReference type="GO" id="GO:0099164">
    <property type="term" value="C:postsynaptic specialization membrane of symmetric synapse"/>
    <property type="evidence" value="ECO:0000314"/>
    <property type="project" value="SynGO"/>
</dbReference>
<dbReference type="GO" id="GO:0001726">
    <property type="term" value="C:ruffle"/>
    <property type="evidence" value="ECO:0000314"/>
    <property type="project" value="UniProtKB"/>
</dbReference>
<dbReference type="GO" id="GO:0000151">
    <property type="term" value="C:ubiquitin ligase complex"/>
    <property type="evidence" value="ECO:0007669"/>
    <property type="project" value="Ensembl"/>
</dbReference>
<dbReference type="GO" id="GO:0042802">
    <property type="term" value="F:identical protein binding"/>
    <property type="evidence" value="ECO:0000353"/>
    <property type="project" value="IntAct"/>
</dbReference>
<dbReference type="GO" id="GO:0042803">
    <property type="term" value="F:protein homodimerization activity"/>
    <property type="evidence" value="ECO:0000250"/>
    <property type="project" value="UniProtKB"/>
</dbReference>
<dbReference type="GO" id="GO:0030036">
    <property type="term" value="P:actin cytoskeleton organization"/>
    <property type="evidence" value="ECO:0000315"/>
    <property type="project" value="UniProtKB"/>
</dbReference>
<dbReference type="GO" id="GO:0007160">
    <property type="term" value="P:cell-matrix adhesion"/>
    <property type="evidence" value="ECO:0000315"/>
    <property type="project" value="UniProtKB"/>
</dbReference>
<dbReference type="GO" id="GO:0098968">
    <property type="term" value="P:neurotransmitter receptor transport postsynaptic membrane to endosome"/>
    <property type="evidence" value="ECO:0000314"/>
    <property type="project" value="SynGO"/>
</dbReference>
<dbReference type="GO" id="GO:0008360">
    <property type="term" value="P:regulation of cell shape"/>
    <property type="evidence" value="ECO:0000315"/>
    <property type="project" value="UniProtKB"/>
</dbReference>
<dbReference type="GO" id="GO:0002090">
    <property type="term" value="P:regulation of receptor internalization"/>
    <property type="evidence" value="ECO:0000250"/>
    <property type="project" value="UniProtKB"/>
</dbReference>
<dbReference type="GO" id="GO:0099003">
    <property type="term" value="P:vesicle-mediated transport in synapse"/>
    <property type="evidence" value="ECO:0000314"/>
    <property type="project" value="SynGO"/>
</dbReference>
<dbReference type="FunFam" id="2.120.10.80:FF:000018">
    <property type="entry name" value="Muskelin 1"/>
    <property type="match status" value="1"/>
</dbReference>
<dbReference type="FunFam" id="2.120.10.80:FF:000035">
    <property type="entry name" value="Muskelin 1"/>
    <property type="match status" value="1"/>
</dbReference>
<dbReference type="FunFam" id="2.60.120.260:FF:000066">
    <property type="entry name" value="Muskelin 1"/>
    <property type="match status" value="1"/>
</dbReference>
<dbReference type="Gene3D" id="2.60.120.260">
    <property type="entry name" value="Galactose-binding domain-like"/>
    <property type="match status" value="1"/>
</dbReference>
<dbReference type="Gene3D" id="2.120.10.80">
    <property type="entry name" value="Kelch-type beta propeller"/>
    <property type="match status" value="2"/>
</dbReference>
<dbReference type="InterPro" id="IPR056737">
    <property type="entry name" value="Beta-prop_ATRN-MKLN-like"/>
</dbReference>
<dbReference type="InterPro" id="IPR006595">
    <property type="entry name" value="CTLH_C"/>
</dbReference>
<dbReference type="InterPro" id="IPR052456">
    <property type="entry name" value="CTLH_complex_component"/>
</dbReference>
<dbReference type="InterPro" id="IPR011043">
    <property type="entry name" value="Gal_Oxase/kelch_b-propeller"/>
</dbReference>
<dbReference type="InterPro" id="IPR008979">
    <property type="entry name" value="Galactose-bd-like_sf"/>
</dbReference>
<dbReference type="InterPro" id="IPR015915">
    <property type="entry name" value="Kelch-typ_b-propeller"/>
</dbReference>
<dbReference type="InterPro" id="IPR006594">
    <property type="entry name" value="LisH"/>
</dbReference>
<dbReference type="InterPro" id="IPR010565">
    <property type="entry name" value="Muskelin_N"/>
</dbReference>
<dbReference type="PANTHER" id="PTHR15526">
    <property type="entry name" value="MUSKELIN"/>
    <property type="match status" value="1"/>
</dbReference>
<dbReference type="PANTHER" id="PTHR15526:SF5">
    <property type="entry name" value="MUSKELIN"/>
    <property type="match status" value="1"/>
</dbReference>
<dbReference type="Pfam" id="PF24981">
    <property type="entry name" value="Beta-prop_ATRN-LZTR1"/>
    <property type="match status" value="1"/>
</dbReference>
<dbReference type="Pfam" id="PF13415">
    <property type="entry name" value="Kelch_3"/>
    <property type="match status" value="1"/>
</dbReference>
<dbReference type="Pfam" id="PF06588">
    <property type="entry name" value="Muskelin_N"/>
    <property type="match status" value="1"/>
</dbReference>
<dbReference type="SMART" id="SM00667">
    <property type="entry name" value="LisH"/>
    <property type="match status" value="1"/>
</dbReference>
<dbReference type="SUPFAM" id="SSF50965">
    <property type="entry name" value="Galactose oxidase, central domain"/>
    <property type="match status" value="1"/>
</dbReference>
<dbReference type="SUPFAM" id="SSF49785">
    <property type="entry name" value="Galactose-binding domain-like"/>
    <property type="match status" value="1"/>
</dbReference>
<dbReference type="SUPFAM" id="SSF117281">
    <property type="entry name" value="Kelch motif"/>
    <property type="match status" value="1"/>
</dbReference>
<dbReference type="PROSITE" id="PS50897">
    <property type="entry name" value="CTLH"/>
    <property type="match status" value="1"/>
</dbReference>
<dbReference type="PROSITE" id="PS50896">
    <property type="entry name" value="LISH"/>
    <property type="match status" value="1"/>
</dbReference>
<feature type="initiator methionine" description="Removed" evidence="2">
    <location>
        <position position="1"/>
    </location>
</feature>
<feature type="chain" id="PRO_0000119139" description="Muskelin">
    <location>
        <begin position="2"/>
        <end position="735"/>
    </location>
</feature>
<feature type="domain" description="LisH" evidence="4">
    <location>
        <begin position="172"/>
        <end position="204"/>
    </location>
</feature>
<feature type="domain" description="CTLH" evidence="3">
    <location>
        <begin position="206"/>
        <end position="258"/>
    </location>
</feature>
<feature type="repeat" description="Kelch 1">
    <location>
        <begin position="284"/>
        <end position="330"/>
    </location>
</feature>
<feature type="repeat" description="Kelch 2">
    <location>
        <begin position="339"/>
        <end position="391"/>
    </location>
</feature>
<feature type="repeat" description="Kelch 3">
    <location>
        <begin position="400"/>
        <end position="458"/>
    </location>
</feature>
<feature type="repeat" description="Kelch 4">
    <location>
        <begin position="469"/>
        <end position="515"/>
    </location>
</feature>
<feature type="repeat" description="Kelch 5">
    <location>
        <begin position="526"/>
        <end position="578"/>
    </location>
</feature>
<feature type="repeat" description="Kelch 6">
    <location>
        <begin position="597"/>
        <end position="651"/>
    </location>
</feature>
<feature type="region of interest" description="Important for location in the cytosol" evidence="5">
    <location>
        <begin position="701"/>
        <end position="735"/>
    </location>
</feature>
<feature type="modified residue" description="N-acetylalanine" evidence="2">
    <location>
        <position position="2"/>
    </location>
</feature>
<feature type="mutagenesis site" description="Abolishes targeting to the nucleus." evidence="5">
    <original>KH</original>
    <variation>AA</variation>
    <location>
        <begin position="182"/>
        <end position="183"/>
    </location>
</feature>
<feature type="mutagenesis site" description="Strongly increased location in the nucleus." evidence="5">
    <location>
        <begin position="701"/>
        <end position="735"/>
    </location>
</feature>
<feature type="mutagenesis site" description="No effect on predominant location in the cytosol." evidence="5">
    <original>T</original>
    <variation>A</variation>
    <location>
        <position position="723"/>
    </location>
</feature>
<feature type="mutagenesis site" description="Strongly increased location in the nucleus." evidence="5">
    <original>T</original>
    <variation>D</variation>
    <location>
        <position position="723"/>
    </location>
</feature>
<feature type="strand" evidence="8">
    <location>
        <begin position="18"/>
        <end position="24"/>
    </location>
</feature>
<feature type="helix" evidence="8">
    <location>
        <begin position="32"/>
        <end position="36"/>
    </location>
</feature>
<feature type="strand" evidence="8">
    <location>
        <begin position="45"/>
        <end position="48"/>
    </location>
</feature>
<feature type="strand" evidence="8">
    <location>
        <begin position="52"/>
        <end position="54"/>
    </location>
</feature>
<feature type="strand" evidence="8">
    <location>
        <begin position="58"/>
        <end position="73"/>
    </location>
</feature>
<feature type="strand" evidence="8">
    <location>
        <begin position="83"/>
        <end position="94"/>
    </location>
</feature>
<feature type="strand" evidence="8">
    <location>
        <begin position="97"/>
        <end position="104"/>
    </location>
</feature>
<feature type="strand" evidence="8">
    <location>
        <begin position="108"/>
        <end position="110"/>
    </location>
</feature>
<feature type="strand" evidence="8">
    <location>
        <begin position="113"/>
        <end position="116"/>
    </location>
</feature>
<feature type="strand" evidence="8">
    <location>
        <begin position="128"/>
        <end position="141"/>
    </location>
</feature>
<feature type="strand" evidence="8">
    <location>
        <begin position="150"/>
        <end position="155"/>
    </location>
</feature>
<feature type="helix" evidence="8">
    <location>
        <begin position="158"/>
        <end position="161"/>
    </location>
</feature>
<feature type="helix" evidence="8">
    <location>
        <begin position="162"/>
        <end position="164"/>
    </location>
</feature>
<name>MKLN1_MOUSE</name>
<reference key="1">
    <citation type="journal article" date="1998" name="EMBO J.">
        <title>Muskelin, a novel intracellular mediator of cell adhesive and cytoskeletal responses to thrombospondin-1.</title>
        <authorList>
            <person name="Adams J.C."/>
            <person name="Seed B."/>
            <person name="Lawler J."/>
        </authorList>
    </citation>
    <scope>NUCLEOTIDE SEQUENCE [MRNA]</scope>
    <scope>FUNCTION</scope>
    <scope>SUBCELLULAR LOCATION</scope>
</reference>
<reference key="2">
    <citation type="journal article" date="2004" name="Genome Res.">
        <title>The status, quality, and expansion of the NIH full-length cDNA project: the Mammalian Gene Collection (MGC).</title>
        <authorList>
            <consortium name="The MGC Project Team"/>
        </authorList>
    </citation>
    <scope>NUCLEOTIDE SEQUENCE [LARGE SCALE MRNA]</scope>
    <source>
        <tissue>Mammary tumor</tissue>
    </source>
</reference>
<reference key="3">
    <citation type="journal article" date="2008" name="J. Cell Biol.">
        <title>Novel role of the muskelin-RanBP9 complex as a nucleocytoplasmic mediator of cell morphology regulation.</title>
        <authorList>
            <person name="Valiyaveettil M."/>
            <person name="Bentley A.A."/>
            <person name="Gursahaney P."/>
            <person name="Hussien R."/>
            <person name="Chakravarti R."/>
            <person name="Kureishy N."/>
            <person name="Prag S."/>
            <person name="Adams J.C."/>
        </authorList>
    </citation>
    <scope>FUNCTION</scope>
    <scope>SUBCELLULAR LOCATION</scope>
    <scope>INTERACTION WITH RANBP9</scope>
    <scope>DOMAIN</scope>
    <scope>MUTAGENESIS OF 182-LYS-HIS-183; 701-ASP--LEU-735 AND THR-723</scope>
</reference>
<reference key="4">
    <citation type="journal article" date="2010" name="Cell">
        <title>A tissue-specific atlas of mouse protein phosphorylation and expression.</title>
        <authorList>
            <person name="Huttlin E.L."/>
            <person name="Jedrychowski M.P."/>
            <person name="Elias J.E."/>
            <person name="Goswami T."/>
            <person name="Rad R."/>
            <person name="Beausoleil S.A."/>
            <person name="Villen J."/>
            <person name="Haas W."/>
            <person name="Sowa M.E."/>
            <person name="Gygi S.P."/>
        </authorList>
    </citation>
    <scope>IDENTIFICATION BY MASS SPECTROMETRY [LARGE SCALE ANALYSIS]</scope>
    <source>
        <tissue>Spleen</tissue>
        <tissue>Testis</tissue>
    </source>
</reference>
<reference key="5">
    <citation type="journal article" date="2011" name="Neuron">
        <title>Muskelin regulates actin filament- and microtubule-based GABA(A) receptor transport in neurons.</title>
        <authorList>
            <person name="Heisler F.F."/>
            <person name="Loebrich S."/>
            <person name="Pechmann Y."/>
            <person name="Maier N."/>
            <person name="Zivkovic A.R."/>
            <person name="Tokito M."/>
            <person name="Hausrat T.J."/>
            <person name="Schweizer M."/>
            <person name="Baehring R."/>
            <person name="Holzbaur E.L."/>
            <person name="Schmitz D."/>
            <person name="Kneussel M."/>
        </authorList>
    </citation>
    <scope>DISRUPTION PHENOTYPE</scope>
    <scope>FUNCTION</scope>
    <scope>INTERACTION WITH GABRA1</scope>
    <scope>TISSUE SPECIFICITY</scope>
</reference>
<reference key="6">
    <citation type="journal article" date="2014" name="Acta Crystallogr. D">
        <title>Structure of mouse muskelin discoidin domain and biochemical characterization of its self-association.</title>
        <authorList>
            <person name="Kim K.H."/>
            <person name="Hong S.K."/>
            <person name="Hwang K.Y."/>
            <person name="Kim E.E."/>
        </authorList>
    </citation>
    <scope>X-RAY CRYSTALLOGRAPHY (1.55 ANGSTROMS) OF 12-167</scope>
</reference>
<sequence>MAAGGAVAVAPECRLLPYALHKWSSFSSTYLPENILVDKPNDQSSRWSSESNYPPQYLILKLERPAIVQNITFGKYEKTHVCNLKKFKVFGGMNEENMTELLSSGLKNDYNKETFTLKHKIDEQMFPCRFIKIVPLLSWGPSFNFSIWYVELSGIDDPDIVQPCLNWYSKYREQEAIRLCLKHFRQHNYTEAFESLQKKTKIALEHPMLTDMHDKLVLKGDFDACEELIEKAVNDGLFNQYISQQEYKPRWSQIIPKSTKGDGEDNRPGMRGGHQMVIDVQTETVYLFGGWDGTQDLADFWAYSVKENQWTCISRDTEKENGPSARSCHKMCIDIQRRQIYTLGRYLDSSVRNSKSLKSDFYRYDIDTNTWMLLSEDTAADGGPKLVFDHQMCMDSEKHMIYTFGGRILTCNGSVDDSRASEPQFSGLFAFNCQCQTWKLLREDSCNAGPEDIQSRIGHCMLFHSKNRCLYVFGGQRSKTYLNDFFSYDVDSDHVDIISDGTKKDSGMVPMTGFTQRATIDPELNEIHVLSGLSKDKEKREENVRNSFWIYDIVRNSWSCVYKNDQATKDNLSKSLQEEEPCPRFAHQLVYDELHKVHYLFGGNPGKSCSPKMRLDDFWSLKLCRPSKDYLLRHCKYLIRKHRFEEKAQMDPLSALKYLQNDLYITVDHSDPEETKEFQLLASALFKSGSDFTALGFSDVDHTYAQRTQLFDTLVNFFPDSMTPPKGNLVDLITL</sequence>
<gene>
    <name type="primary">Mkln1</name>
</gene>
<comment type="function">
    <text evidence="2 5 6 7">Component of the CTLH E3 ubiquitin-protein ligase complex that selectively accepts ubiquitin from UBE2H and mediates ubiquitination and subsequent proteasomal degradation of the transcription factor HBP1 (By similarity). Required for internalization of the GABA receptor GABRA1 from the cell membrane via endosomes and subsequent GABRA1 degradation (PubMed:21482357). Acts as a mediator of cell spreading and cytoskeletal responses to the extracellular matrix component THBS1 (PubMed:18710924, PubMed:9724633).</text>
</comment>
<comment type="subunit">
    <text evidence="1 2 5 6">Homodimer; may form higher oligomers (By similarity). Identified in the CTLH complex that contains GID4, RANBP9 and/or RANBP10, MKLN1, MAEA, RMND5A (or alternatively its paralog RMND5B), GID8, ARMC8, WDR26 and YPEL5. Within this complex, MAEA, RMND5A (or alternatively its paralog RMND5B), GID8, WDR26, and RANBP9 and/or RANBP10 form the catalytic core, while GID4, MKLN1, ARMC8 and YPEL5 have ancillary roles (By similarity). Interacts with RANBP9 (PubMed:18710924). Part of a complex consisting of RANBP9, MKLN1 and GID8 (By similarity). Interacts with GABRA1 (PubMed:21482357). Interacts with the C-terminal tail of PTGER3 (By similarity).</text>
</comment>
<comment type="interaction">
    <interactant intactId="EBI-11017656">
        <id>O89050</id>
    </interactant>
    <interactant intactId="EBI-11017656">
        <id>O89050</id>
        <label>Mkln1</label>
    </interactant>
    <organismsDiffer>false</organismsDiffer>
    <experiments>4</experiments>
</comment>
<comment type="subcellular location">
    <subcellularLocation>
        <location evidence="7">Cytoplasm</location>
    </subcellularLocation>
    <subcellularLocation>
        <location evidence="5">Cytoplasm</location>
        <location evidence="5">Cytosol</location>
    </subcellularLocation>
    <subcellularLocation>
        <location evidence="5">Nucleus</location>
        <location evidence="5">Nucleoplasm</location>
    </subcellularLocation>
    <subcellularLocation>
        <location evidence="7">Cell projection</location>
        <location evidence="7">Ruffle</location>
    </subcellularLocation>
    <subcellularLocation>
        <location evidence="7">Cytoplasm</location>
        <location evidence="7">Cell cortex</location>
    </subcellularLocation>
    <subcellularLocation>
        <location evidence="6">Synapse</location>
    </subcellularLocation>
    <subcellularLocation>
        <location evidence="6">Postsynapse</location>
    </subcellularLocation>
    <text evidence="6 7">Colocalizes with GABRA1 at synapses and in postsynaptic regions (PubMed:21482357). Colocalizes with actin fibers in the cell cortex.</text>
</comment>
<comment type="tissue specificity">
    <text evidence="6">Detected in brain, especially in hippocampus and cerebellum (at protein level).</text>
</comment>
<comment type="domain">
    <text evidence="1 5">The LisH domain contains a nuclear targeting signal (PubMed:18710924). The LisH domain mediates head to tail dimerization (By similarity).</text>
</comment>
<comment type="disruption phenotype">
    <text evidence="6">No visible phenotype. Hippocampus slices from mutant mice show minor differences in the amplitude of miniature inhibitory postsynaptic currents, and somewhat slower decay times.</text>
</comment>
<protein>
    <recommendedName>
        <fullName>Muskelin</fullName>
    </recommendedName>
</protein>
<organism>
    <name type="scientific">Mus musculus</name>
    <name type="common">Mouse</name>
    <dbReference type="NCBI Taxonomy" id="10090"/>
    <lineage>
        <taxon>Eukaryota</taxon>
        <taxon>Metazoa</taxon>
        <taxon>Chordata</taxon>
        <taxon>Craniata</taxon>
        <taxon>Vertebrata</taxon>
        <taxon>Euteleostomi</taxon>
        <taxon>Mammalia</taxon>
        <taxon>Eutheria</taxon>
        <taxon>Euarchontoglires</taxon>
        <taxon>Glires</taxon>
        <taxon>Rodentia</taxon>
        <taxon>Myomorpha</taxon>
        <taxon>Muroidea</taxon>
        <taxon>Muridae</taxon>
        <taxon>Murinae</taxon>
        <taxon>Mus</taxon>
        <taxon>Mus</taxon>
    </lineage>
</organism>